<comment type="function">
    <text evidence="1">Component of the cytochrome b6-f complex, which mediates electron transfer between photosystem II (PSII) and photosystem I (PSI), cyclic electron flow around PSI, and state transitions.</text>
</comment>
<comment type="subunit">
    <text evidence="1">The 4 large subunits of the cytochrome b6-f complex are cytochrome b6, subunit IV (17 kDa polypeptide, PetD), cytochrome f and the Rieske protein, while the 4 small subunits are PetG, PetL, PetM and PetN. The complex functions as a dimer.</text>
</comment>
<comment type="subcellular location">
    <subcellularLocation>
        <location evidence="1">Plastid</location>
        <location evidence="1">Chloroplast thylakoid membrane</location>
        <topology evidence="1">Single-pass membrane protein</topology>
    </subcellularLocation>
</comment>
<comment type="similarity">
    <text evidence="1">Belongs to the PetM family.</text>
</comment>
<accession>P51275</accession>
<dbReference type="EMBL" id="U38804">
    <property type="protein sequence ID" value="AAC08161.1"/>
    <property type="molecule type" value="Genomic_DNA"/>
</dbReference>
<dbReference type="PIR" id="S73196">
    <property type="entry name" value="S73196"/>
</dbReference>
<dbReference type="RefSeq" id="NP_053885.1">
    <property type="nucleotide sequence ID" value="NC_000925.1"/>
</dbReference>
<dbReference type="SMR" id="P51275"/>
<dbReference type="GeneID" id="809905"/>
<dbReference type="GO" id="GO:0009535">
    <property type="term" value="C:chloroplast thylakoid membrane"/>
    <property type="evidence" value="ECO:0007669"/>
    <property type="project" value="UniProtKB-SubCell"/>
</dbReference>
<dbReference type="GO" id="GO:0009512">
    <property type="term" value="C:cytochrome b6f complex"/>
    <property type="evidence" value="ECO:0007669"/>
    <property type="project" value="InterPro"/>
</dbReference>
<dbReference type="GO" id="GO:0009055">
    <property type="term" value="F:electron transfer activity"/>
    <property type="evidence" value="ECO:0007669"/>
    <property type="project" value="UniProtKB-UniRule"/>
</dbReference>
<dbReference type="GO" id="GO:0015979">
    <property type="term" value="P:photosynthesis"/>
    <property type="evidence" value="ECO:0007669"/>
    <property type="project" value="UniProtKB-KW"/>
</dbReference>
<dbReference type="HAMAP" id="MF_00396">
    <property type="entry name" value="Cytb6_f_PetM"/>
    <property type="match status" value="1"/>
</dbReference>
<dbReference type="InterPro" id="IPR012595">
    <property type="entry name" value="PetM_cyt_b6/f_cplx_su7"/>
</dbReference>
<dbReference type="Pfam" id="PF08041">
    <property type="entry name" value="PetM"/>
    <property type="match status" value="1"/>
</dbReference>
<dbReference type="SUPFAM" id="SSF103441">
    <property type="entry name" value="PetM subunit of the cytochrome b6f complex"/>
    <property type="match status" value="1"/>
</dbReference>
<reference key="1">
    <citation type="journal article" date="1995" name="Plant Mol. Biol. Rep.">
        <title>Complete nucleotide sequence of the Porphyra purpurea chloroplast genome.</title>
        <authorList>
            <person name="Reith M.E."/>
            <person name="Munholland J."/>
        </authorList>
    </citation>
    <scope>NUCLEOTIDE SEQUENCE [LARGE SCALE GENOMIC DNA]</scope>
    <source>
        <strain>Avonport</strain>
    </source>
</reference>
<feature type="chain" id="PRO_0000218012" description="Cytochrome b6-f complex subunit 7">
    <location>
        <begin position="1"/>
        <end position="32"/>
    </location>
</feature>
<feature type="transmembrane region" description="Helical" evidence="1">
    <location>
        <begin position="9"/>
        <end position="29"/>
    </location>
</feature>
<gene>
    <name evidence="1" type="primary">petM</name>
    <name type="synonym">ycf31</name>
</gene>
<evidence type="ECO:0000255" key="1">
    <source>
        <dbReference type="HAMAP-Rule" id="MF_00396"/>
    </source>
</evidence>
<organism>
    <name type="scientific">Porphyra purpurea</name>
    <name type="common">Red seaweed</name>
    <name type="synonym">Ulva purpurea</name>
    <dbReference type="NCBI Taxonomy" id="2787"/>
    <lineage>
        <taxon>Eukaryota</taxon>
        <taxon>Rhodophyta</taxon>
        <taxon>Bangiophyceae</taxon>
        <taxon>Bangiales</taxon>
        <taxon>Bangiaceae</taxon>
        <taxon>Porphyra</taxon>
    </lineage>
</organism>
<name>PETM_PORPU</name>
<keyword id="KW-0150">Chloroplast</keyword>
<keyword id="KW-0249">Electron transport</keyword>
<keyword id="KW-0472">Membrane</keyword>
<keyword id="KW-0602">Photosynthesis</keyword>
<keyword id="KW-0934">Plastid</keyword>
<keyword id="KW-0793">Thylakoid</keyword>
<keyword id="KW-0812">Transmembrane</keyword>
<keyword id="KW-1133">Transmembrane helix</keyword>
<keyword id="KW-0813">Transport</keyword>
<geneLocation type="chloroplast"/>
<sequence>MGKEIVESAILSSVLVLVGLAVGFLLLKVQGE</sequence>
<protein>
    <recommendedName>
        <fullName evidence="1">Cytochrome b6-f complex subunit 7</fullName>
    </recommendedName>
    <alternativeName>
        <fullName evidence="1">Cytochrome b6-f complex subunit PetM</fullName>
    </alternativeName>
    <alternativeName>
        <fullName evidence="1">Cytochrome b6-f complex subunit VII</fullName>
    </alternativeName>
</protein>
<proteinExistence type="inferred from homology"/>